<protein>
    <recommendedName>
        <fullName>U-box domain-containing protein 52</fullName>
    </recommendedName>
    <alternativeName>
        <fullName>Plant U-box protein 52</fullName>
    </alternativeName>
    <domain>
        <recommendedName>
            <fullName>E3 ubiquitin ligase</fullName>
            <ecNumber>2.3.2.27</ecNumber>
        </recommendedName>
        <alternativeName>
            <fullName evidence="6">RING-type E3 ubiquitin transferase</fullName>
        </alternativeName>
    </domain>
    <domain>
        <recommendedName>
            <fullName>Serine/threonine-protein kinase</fullName>
            <ecNumber>2.7.11.-</ecNumber>
        </recommendedName>
    </domain>
</protein>
<gene>
    <name type="primary">PUB52</name>
    <name type="ordered locus">At5g61550</name>
    <name type="ORF">K11J9.12</name>
</gene>
<name>PUB52_ARATH</name>
<comment type="function">
    <text evidence="1">Functions as an E3 ubiquitin ligase.</text>
</comment>
<comment type="catalytic activity">
    <reaction>
        <text>L-seryl-[protein] + ATP = O-phospho-L-seryl-[protein] + ADP + H(+)</text>
        <dbReference type="Rhea" id="RHEA:17989"/>
        <dbReference type="Rhea" id="RHEA-COMP:9863"/>
        <dbReference type="Rhea" id="RHEA-COMP:11604"/>
        <dbReference type="ChEBI" id="CHEBI:15378"/>
        <dbReference type="ChEBI" id="CHEBI:29999"/>
        <dbReference type="ChEBI" id="CHEBI:30616"/>
        <dbReference type="ChEBI" id="CHEBI:83421"/>
        <dbReference type="ChEBI" id="CHEBI:456216"/>
    </reaction>
</comment>
<comment type="catalytic activity">
    <reaction>
        <text>L-threonyl-[protein] + ATP = O-phospho-L-threonyl-[protein] + ADP + H(+)</text>
        <dbReference type="Rhea" id="RHEA:46608"/>
        <dbReference type="Rhea" id="RHEA-COMP:11060"/>
        <dbReference type="Rhea" id="RHEA-COMP:11605"/>
        <dbReference type="ChEBI" id="CHEBI:15378"/>
        <dbReference type="ChEBI" id="CHEBI:30013"/>
        <dbReference type="ChEBI" id="CHEBI:30616"/>
        <dbReference type="ChEBI" id="CHEBI:61977"/>
        <dbReference type="ChEBI" id="CHEBI:456216"/>
    </reaction>
</comment>
<comment type="catalytic activity">
    <reaction>
        <text>S-ubiquitinyl-[E2 ubiquitin-conjugating enzyme]-L-cysteine + [acceptor protein]-L-lysine = [E2 ubiquitin-conjugating enzyme]-L-cysteine + N(6)-ubiquitinyl-[acceptor protein]-L-lysine.</text>
        <dbReference type="EC" id="2.3.2.27"/>
    </reaction>
</comment>
<comment type="pathway">
    <text>Protein modification; protein ubiquitination.</text>
</comment>
<comment type="alternative products">
    <event type="alternative splicing"/>
    <isoform>
        <id>Q9FKG6-1</id>
        <name>1</name>
        <sequence type="displayed"/>
    </isoform>
    <text>A number of isoforms are produced. According to EST sequences.</text>
</comment>
<comment type="similarity">
    <text evidence="3">Belongs to the protein kinase superfamily. Ser/Thr protein kinase family.</text>
</comment>
<comment type="sequence caution" evidence="6">
    <conflict type="frameshift">
        <sequence resource="EMBL" id="AK228422"/>
    </conflict>
</comment>
<feature type="chain" id="PRO_0000322145" description="U-box domain-containing protein 52">
    <location>
        <begin position="1"/>
        <end position="845"/>
    </location>
</feature>
<feature type="domain" description="Protein kinase" evidence="3">
    <location>
        <begin position="490"/>
        <end position="754"/>
    </location>
</feature>
<feature type="domain" description="U-box">
    <location>
        <begin position="774"/>
        <end position="845"/>
    </location>
</feature>
<feature type="region of interest" description="Disordered" evidence="5">
    <location>
        <begin position="180"/>
        <end position="210"/>
    </location>
</feature>
<feature type="region of interest" description="Disordered" evidence="5">
    <location>
        <begin position="229"/>
        <end position="258"/>
    </location>
</feature>
<feature type="coiled-coil region" evidence="2">
    <location>
        <begin position="351"/>
        <end position="468"/>
    </location>
</feature>
<feature type="compositionally biased region" description="Low complexity" evidence="5">
    <location>
        <begin position="187"/>
        <end position="204"/>
    </location>
</feature>
<feature type="compositionally biased region" description="Polar residues" evidence="5">
    <location>
        <begin position="236"/>
        <end position="251"/>
    </location>
</feature>
<feature type="active site" description="Proton acceptor" evidence="3 4">
    <location>
        <position position="612"/>
    </location>
</feature>
<feature type="binding site" evidence="3">
    <location>
        <begin position="496"/>
        <end position="504"/>
    </location>
    <ligand>
        <name>ATP</name>
        <dbReference type="ChEBI" id="CHEBI:30616"/>
    </ligand>
</feature>
<feature type="binding site" evidence="3">
    <location>
        <position position="517"/>
    </location>
    <ligand>
        <name>ATP</name>
        <dbReference type="ChEBI" id="CHEBI:30616"/>
    </ligand>
</feature>
<reference key="1">
    <citation type="journal article" date="1998" name="DNA Res.">
        <title>Structural analysis of Arabidopsis thaliana chromosome 5. VI. Sequence features of the regions of 1,367,185 bp covered by 19 physically assigned P1 and TAC clones.</title>
        <authorList>
            <person name="Kotani H."/>
            <person name="Nakamura Y."/>
            <person name="Sato S."/>
            <person name="Asamizu E."/>
            <person name="Kaneko T."/>
            <person name="Miyajima N."/>
            <person name="Tabata S."/>
        </authorList>
    </citation>
    <scope>NUCLEOTIDE SEQUENCE [LARGE SCALE GENOMIC DNA]</scope>
    <source>
        <strain>cv. Columbia</strain>
    </source>
</reference>
<reference key="2">
    <citation type="journal article" date="2017" name="Plant J.">
        <title>Araport11: a complete reannotation of the Arabidopsis thaliana reference genome.</title>
        <authorList>
            <person name="Cheng C.Y."/>
            <person name="Krishnakumar V."/>
            <person name="Chan A.P."/>
            <person name="Thibaud-Nissen F."/>
            <person name="Schobel S."/>
            <person name="Town C.D."/>
        </authorList>
    </citation>
    <scope>GENOME REANNOTATION</scope>
    <source>
        <strain>cv. Columbia</strain>
    </source>
</reference>
<reference key="3">
    <citation type="submission" date="2006-07" db="EMBL/GenBank/DDBJ databases">
        <title>Large-scale analysis of RIKEN Arabidopsis full-length (RAFL) cDNAs.</title>
        <authorList>
            <person name="Totoki Y."/>
            <person name="Seki M."/>
            <person name="Ishida J."/>
            <person name="Nakajima M."/>
            <person name="Enju A."/>
            <person name="Kamiya A."/>
            <person name="Narusaka M."/>
            <person name="Shin-i T."/>
            <person name="Nakagawa M."/>
            <person name="Sakamoto N."/>
            <person name="Oishi K."/>
            <person name="Kohara Y."/>
            <person name="Kobayashi M."/>
            <person name="Toyoda A."/>
            <person name="Sakaki Y."/>
            <person name="Sakurai T."/>
            <person name="Iida K."/>
            <person name="Akiyama K."/>
            <person name="Satou M."/>
            <person name="Toyoda T."/>
            <person name="Konagaya A."/>
            <person name="Carninci P."/>
            <person name="Kawai J."/>
            <person name="Hayashizaki Y."/>
            <person name="Shinozaki K."/>
        </authorList>
    </citation>
    <scope>NUCLEOTIDE SEQUENCE [LARGE SCALE MRNA]</scope>
    <source>
        <strain>cv. Columbia</strain>
    </source>
</reference>
<sequence>MEEKKVVRALSEHLSLPPPPSPSVAVAINGKKKSKYVVFWALEKFIPEGFTDFKLLYVRPPVSYIPTPMGIAVAVSELREDVVSAYKQELDWSANEMLRPYKKMFERRKVQVEVLLLDSLEPAAAIAEEIAGTGVTKLVIGMSLRGFFSRKIDMSSLIATAVPRFCTVYVISKGKLASVRPSESDASGSIRFERSSSTSGSTDSPRLPPEYQDFLSAVSEAQSRVSPFSPALKHSMGSNAVAQMDTSSSGTDQEEVSTGRGMEIVHSGIEGKKNKDESFSASFPMGTEAYNSMSWTSKWRDHEDRREMRSSSSSNNHDLVNMDWGAVVPENYSWVSHTASHMSDGLLSVHSITDNQVNLNFEIEKLRAELKHVQEMYAMAQTETVGASKKLTELNQRRFEESEKLVELKEKEEVAKDTASKEKQRYEEAMKEAEKVKELMMKEALHRREAEFKAERDAREKDKLQASLVSPGVQYQHYTWEEIAAATSDFAENLKIGIGAYGSVYKCNLHHTTGAVKVLHAGETQLSKQFDQELEILSKIRHPHLVLLLGACPERGCLVYEYMDNGSLDDRLMLVNDTPPIPWFERFRIALEVASALVFLHKSKPRPIIHRDLKPGNILLDHNFVSKLGDVGLSTMVNQDDVSSRTIFKQTSPVGTLCYIDPEYQRTGIISPKSDVYSLGVVILQLITAKPAIAITHMVEEAIGDDAEFMAILDKKAGSWPISDTRELAALGLCCTEMRRRDRPDLKDQIIPALERLRKVADKAQNLLSRTPSGPPSHFICPLLKGVMNEPCVAADGYTYDREAIEEWLRQKDTSPVTNLPLPNKNLIANYTLYSAIMEWKSNKR</sequence>
<proteinExistence type="evidence at transcript level"/>
<organism>
    <name type="scientific">Arabidopsis thaliana</name>
    <name type="common">Mouse-ear cress</name>
    <dbReference type="NCBI Taxonomy" id="3702"/>
    <lineage>
        <taxon>Eukaryota</taxon>
        <taxon>Viridiplantae</taxon>
        <taxon>Streptophyta</taxon>
        <taxon>Embryophyta</taxon>
        <taxon>Tracheophyta</taxon>
        <taxon>Spermatophyta</taxon>
        <taxon>Magnoliopsida</taxon>
        <taxon>eudicotyledons</taxon>
        <taxon>Gunneridae</taxon>
        <taxon>Pentapetalae</taxon>
        <taxon>rosids</taxon>
        <taxon>malvids</taxon>
        <taxon>Brassicales</taxon>
        <taxon>Brassicaceae</taxon>
        <taxon>Camelineae</taxon>
        <taxon>Arabidopsis</taxon>
    </lineage>
</organism>
<dbReference type="EC" id="2.3.2.27"/>
<dbReference type="EC" id="2.7.11.-"/>
<dbReference type="EMBL" id="AB012239">
    <property type="protein sequence ID" value="BAB08999.1"/>
    <property type="molecule type" value="Genomic_DNA"/>
</dbReference>
<dbReference type="EMBL" id="CP002688">
    <property type="protein sequence ID" value="AED97486.1"/>
    <property type="molecule type" value="Genomic_DNA"/>
</dbReference>
<dbReference type="EMBL" id="CP002688">
    <property type="protein sequence ID" value="ANM70540.1"/>
    <property type="molecule type" value="Genomic_DNA"/>
</dbReference>
<dbReference type="EMBL" id="CP002688">
    <property type="protein sequence ID" value="ANM70541.1"/>
    <property type="molecule type" value="Genomic_DNA"/>
</dbReference>
<dbReference type="EMBL" id="AK228422">
    <property type="status" value="NOT_ANNOTATED_CDS"/>
    <property type="molecule type" value="mRNA"/>
</dbReference>
<dbReference type="RefSeq" id="NP_001332142.1">
    <molecule id="Q9FKG6-1"/>
    <property type="nucleotide sequence ID" value="NM_001345481.1"/>
</dbReference>
<dbReference type="RefSeq" id="NP_001332143.1">
    <molecule id="Q9FKG6-1"/>
    <property type="nucleotide sequence ID" value="NM_001345480.1"/>
</dbReference>
<dbReference type="RefSeq" id="NP_200963.1">
    <molecule id="Q9FKG6-1"/>
    <property type="nucleotide sequence ID" value="NM_125548.4"/>
</dbReference>
<dbReference type="SMR" id="Q9FKG6"/>
<dbReference type="FunCoup" id="Q9FKG6">
    <property type="interactions" value="53"/>
</dbReference>
<dbReference type="STRING" id="3702.Q9FKG6"/>
<dbReference type="PaxDb" id="3702-AT5G61550.2"/>
<dbReference type="EnsemblPlants" id="AT5G61550.1">
    <molecule id="Q9FKG6-1"/>
    <property type="protein sequence ID" value="AT5G61550.1"/>
    <property type="gene ID" value="AT5G61550"/>
</dbReference>
<dbReference type="EnsemblPlants" id="AT5G61550.3">
    <molecule id="Q9FKG6-1"/>
    <property type="protein sequence ID" value="AT5G61550.3"/>
    <property type="gene ID" value="AT5G61550"/>
</dbReference>
<dbReference type="EnsemblPlants" id="AT5G61550.4">
    <molecule id="Q9FKG6-1"/>
    <property type="protein sequence ID" value="AT5G61550.4"/>
    <property type="gene ID" value="AT5G61550"/>
</dbReference>
<dbReference type="GeneID" id="836276"/>
<dbReference type="Gramene" id="AT5G61550.1">
    <molecule id="Q9FKG6-1"/>
    <property type="protein sequence ID" value="AT5G61550.1"/>
    <property type="gene ID" value="AT5G61550"/>
</dbReference>
<dbReference type="Gramene" id="AT5G61550.3">
    <molecule id="Q9FKG6-1"/>
    <property type="protein sequence ID" value="AT5G61550.3"/>
    <property type="gene ID" value="AT5G61550"/>
</dbReference>
<dbReference type="Gramene" id="AT5G61550.4">
    <molecule id="Q9FKG6-1"/>
    <property type="protein sequence ID" value="AT5G61550.4"/>
    <property type="gene ID" value="AT5G61550"/>
</dbReference>
<dbReference type="KEGG" id="ath:AT5G61550"/>
<dbReference type="Araport" id="AT5G61550"/>
<dbReference type="TAIR" id="AT5G61550"/>
<dbReference type="eggNOG" id="ENOG502QQ92">
    <property type="taxonomic scope" value="Eukaryota"/>
</dbReference>
<dbReference type="HOGENOM" id="CLU_000288_153_1_1"/>
<dbReference type="InParanoid" id="Q9FKG6"/>
<dbReference type="OMA" id="DWNTNET"/>
<dbReference type="OrthoDB" id="10064100at2759"/>
<dbReference type="PhylomeDB" id="Q9FKG6"/>
<dbReference type="UniPathway" id="UPA00143"/>
<dbReference type="PRO" id="PR:Q9FKG6"/>
<dbReference type="Proteomes" id="UP000006548">
    <property type="component" value="Chromosome 5"/>
</dbReference>
<dbReference type="ExpressionAtlas" id="Q9FKG6">
    <property type="expression patterns" value="baseline and differential"/>
</dbReference>
<dbReference type="GO" id="GO:0005524">
    <property type="term" value="F:ATP binding"/>
    <property type="evidence" value="ECO:0007669"/>
    <property type="project" value="UniProtKB-KW"/>
</dbReference>
<dbReference type="GO" id="GO:0106310">
    <property type="term" value="F:protein serine kinase activity"/>
    <property type="evidence" value="ECO:0007669"/>
    <property type="project" value="RHEA"/>
</dbReference>
<dbReference type="GO" id="GO:0004674">
    <property type="term" value="F:protein serine/threonine kinase activity"/>
    <property type="evidence" value="ECO:0007669"/>
    <property type="project" value="UniProtKB-KW"/>
</dbReference>
<dbReference type="GO" id="GO:0004842">
    <property type="term" value="F:ubiquitin-protein transferase activity"/>
    <property type="evidence" value="ECO:0007669"/>
    <property type="project" value="InterPro"/>
</dbReference>
<dbReference type="GO" id="GO:0016567">
    <property type="term" value="P:protein ubiquitination"/>
    <property type="evidence" value="ECO:0007669"/>
    <property type="project" value="UniProtKB-UniPathway"/>
</dbReference>
<dbReference type="CDD" id="cd16655">
    <property type="entry name" value="RING-Ubox_WDSUB1-like"/>
    <property type="match status" value="1"/>
</dbReference>
<dbReference type="CDD" id="cd01989">
    <property type="entry name" value="USP_STK_Ubox_N"/>
    <property type="match status" value="1"/>
</dbReference>
<dbReference type="Gene3D" id="3.40.50.620">
    <property type="entry name" value="HUPs"/>
    <property type="match status" value="1"/>
</dbReference>
<dbReference type="Gene3D" id="3.30.200.20">
    <property type="entry name" value="Phosphorylase Kinase, domain 1"/>
    <property type="match status" value="1"/>
</dbReference>
<dbReference type="Gene3D" id="1.10.510.10">
    <property type="entry name" value="Transferase(Phosphotransferase) domain 1"/>
    <property type="match status" value="1"/>
</dbReference>
<dbReference type="Gene3D" id="3.30.40.10">
    <property type="entry name" value="Zinc/RING finger domain, C3HC4 (zinc finger)"/>
    <property type="match status" value="1"/>
</dbReference>
<dbReference type="InterPro" id="IPR011009">
    <property type="entry name" value="Kinase-like_dom_sf"/>
</dbReference>
<dbReference type="InterPro" id="IPR000719">
    <property type="entry name" value="Prot_kinase_dom"/>
</dbReference>
<dbReference type="InterPro" id="IPR014729">
    <property type="entry name" value="Rossmann-like_a/b/a_fold"/>
</dbReference>
<dbReference type="InterPro" id="IPR008271">
    <property type="entry name" value="Ser/Thr_kinase_AS"/>
</dbReference>
<dbReference type="InterPro" id="IPR051348">
    <property type="entry name" value="U-box_ubiquitin_ligases"/>
</dbReference>
<dbReference type="InterPro" id="IPR003613">
    <property type="entry name" value="Ubox_domain"/>
</dbReference>
<dbReference type="InterPro" id="IPR013083">
    <property type="entry name" value="Znf_RING/FYVE/PHD"/>
</dbReference>
<dbReference type="PANTHER" id="PTHR45647">
    <property type="entry name" value="OS02G0152300 PROTEIN"/>
    <property type="match status" value="1"/>
</dbReference>
<dbReference type="PANTHER" id="PTHR45647:SF80">
    <property type="entry name" value="U-BOX DOMAIN-CONTAINING PROTEIN 52"/>
    <property type="match status" value="1"/>
</dbReference>
<dbReference type="Pfam" id="PF00069">
    <property type="entry name" value="Pkinase"/>
    <property type="match status" value="1"/>
</dbReference>
<dbReference type="Pfam" id="PF04564">
    <property type="entry name" value="U-box"/>
    <property type="match status" value="1"/>
</dbReference>
<dbReference type="SMART" id="SM00220">
    <property type="entry name" value="S_TKc"/>
    <property type="match status" value="1"/>
</dbReference>
<dbReference type="SMART" id="SM00504">
    <property type="entry name" value="Ubox"/>
    <property type="match status" value="1"/>
</dbReference>
<dbReference type="SUPFAM" id="SSF52402">
    <property type="entry name" value="Adenine nucleotide alpha hydrolases-like"/>
    <property type="match status" value="1"/>
</dbReference>
<dbReference type="SUPFAM" id="SSF56112">
    <property type="entry name" value="Protein kinase-like (PK-like)"/>
    <property type="match status" value="1"/>
</dbReference>
<dbReference type="SUPFAM" id="SSF57850">
    <property type="entry name" value="RING/U-box"/>
    <property type="match status" value="1"/>
</dbReference>
<dbReference type="PROSITE" id="PS50011">
    <property type="entry name" value="PROTEIN_KINASE_DOM"/>
    <property type="match status" value="1"/>
</dbReference>
<dbReference type="PROSITE" id="PS00108">
    <property type="entry name" value="PROTEIN_KINASE_ST"/>
    <property type="match status" value="1"/>
</dbReference>
<dbReference type="PROSITE" id="PS51698">
    <property type="entry name" value="U_BOX"/>
    <property type="match status" value="1"/>
</dbReference>
<evidence type="ECO:0000250" key="1"/>
<evidence type="ECO:0000255" key="2"/>
<evidence type="ECO:0000255" key="3">
    <source>
        <dbReference type="PROSITE-ProRule" id="PRU00159"/>
    </source>
</evidence>
<evidence type="ECO:0000255" key="4">
    <source>
        <dbReference type="PROSITE-ProRule" id="PRU10027"/>
    </source>
</evidence>
<evidence type="ECO:0000256" key="5">
    <source>
        <dbReference type="SAM" id="MobiDB-lite"/>
    </source>
</evidence>
<evidence type="ECO:0000305" key="6"/>
<keyword id="KW-0025">Alternative splicing</keyword>
<keyword id="KW-0067">ATP-binding</keyword>
<keyword id="KW-0175">Coiled coil</keyword>
<keyword id="KW-0418">Kinase</keyword>
<keyword id="KW-0547">Nucleotide-binding</keyword>
<keyword id="KW-1185">Reference proteome</keyword>
<keyword id="KW-0723">Serine/threonine-protein kinase</keyword>
<keyword id="KW-0808">Transferase</keyword>
<keyword id="KW-0833">Ubl conjugation pathway</keyword>
<accession>Q9FKG6</accession>